<sequence>MSMMLSNWALSPRYVGQRNLIHCTTLFHTLTRWAKDADDKYHDINSMYENMFTPSNDNVSILQDEGKSDYDTTKTSSMQEDISAFNKDLYNFYNIGYAKQIMSASQLENIVKAKGRFVIQSLSTSPYYNLALENYVFKNTPRAKRGPDNCRLLFYINDRCAVIGKNQNLWQEVDLAKLKSKNFELLRRFSGGGTVLHDLGNVNYSYLTSREKFETKFFNKMIIKWLNSLNPELRLDLNERGDIIQDGFKISGSAYKIAGGKAYHHATMLLNADLEQFSGLLEPSLPNNMEWESSGVHSVKSKIKNVGIITPNQFIAVVSERFQKTFKVDGEIPIYYCDEFKSINDEIKDAMNTLQSEQWKYFSGPKFSVKIKDKGLTIKVEKGMIYDCDRNDLIGLEFKGFLENIDSYT</sequence>
<evidence type="ECO:0000250" key="1"/>
<evidence type="ECO:0000255" key="2">
    <source>
        <dbReference type="PROSITE-ProRule" id="PRU01067"/>
    </source>
</evidence>
<evidence type="ECO:0000305" key="3"/>
<protein>
    <recommendedName>
        <fullName>Putative lipoate-protein ligase A</fullName>
        <ecNumber>6.3.1.20</ecNumber>
    </recommendedName>
    <alternativeName>
        <fullName>Altered inheritance rate of mitochondria protein 22</fullName>
    </alternativeName>
</protein>
<accession>B5VLD2</accession>
<proteinExistence type="inferred from homology"/>
<feature type="chain" id="PRO_0000377669" description="Putative lipoate-protein ligase A">
    <location>
        <begin position="1"/>
        <end position="409"/>
    </location>
</feature>
<feature type="domain" description="BPL/LPL catalytic" evidence="2">
    <location>
        <begin position="146"/>
        <end position="330"/>
    </location>
</feature>
<feature type="binding site" evidence="1">
    <location>
        <position position="188"/>
    </location>
    <ligand>
        <name>ATP</name>
        <dbReference type="ChEBI" id="CHEBI:30616"/>
    </ligand>
</feature>
<feature type="binding site" evidence="1">
    <location>
        <begin position="193"/>
        <end position="196"/>
    </location>
    <ligand>
        <name>ATP</name>
        <dbReference type="ChEBI" id="CHEBI:30616"/>
    </ligand>
</feature>
<feature type="binding site" evidence="1">
    <location>
        <position position="249"/>
    </location>
    <ligand>
        <name>(R)-lipoate</name>
        <dbReference type="ChEBI" id="CHEBI:83088"/>
    </ligand>
</feature>
<feature type="binding site" evidence="1">
    <location>
        <position position="249"/>
    </location>
    <ligand>
        <name>ATP</name>
        <dbReference type="ChEBI" id="CHEBI:30616"/>
    </ligand>
</feature>
<organism>
    <name type="scientific">Saccharomyces cerevisiae (strain AWRI1631)</name>
    <name type="common">Baker's yeast</name>
    <dbReference type="NCBI Taxonomy" id="545124"/>
    <lineage>
        <taxon>Eukaryota</taxon>
        <taxon>Fungi</taxon>
        <taxon>Dikarya</taxon>
        <taxon>Ascomycota</taxon>
        <taxon>Saccharomycotina</taxon>
        <taxon>Saccharomycetes</taxon>
        <taxon>Saccharomycetales</taxon>
        <taxon>Saccharomycetaceae</taxon>
        <taxon>Saccharomyces</taxon>
    </lineage>
</organism>
<keyword id="KW-0067">ATP-binding</keyword>
<keyword id="KW-0436">Ligase</keyword>
<keyword id="KW-0547">Nucleotide-binding</keyword>
<name>LPLA_YEAS6</name>
<dbReference type="EC" id="6.3.1.20"/>
<dbReference type="EMBL" id="ABSV01001321">
    <property type="protein sequence ID" value="EDZ71262.1"/>
    <property type="status" value="ALT_INIT"/>
    <property type="molecule type" value="Genomic_DNA"/>
</dbReference>
<dbReference type="SMR" id="B5VLD2"/>
<dbReference type="OrthoDB" id="34795at4893"/>
<dbReference type="UniPathway" id="UPA00537">
    <property type="reaction ID" value="UER00594"/>
</dbReference>
<dbReference type="UniPathway" id="UPA00537">
    <property type="reaction ID" value="UER00595"/>
</dbReference>
<dbReference type="Proteomes" id="UP000008988">
    <property type="component" value="Unassembled WGS sequence"/>
</dbReference>
<dbReference type="GO" id="GO:0005739">
    <property type="term" value="C:mitochondrion"/>
    <property type="evidence" value="ECO:0007669"/>
    <property type="project" value="TreeGrafter"/>
</dbReference>
<dbReference type="GO" id="GO:0005524">
    <property type="term" value="F:ATP binding"/>
    <property type="evidence" value="ECO:0007669"/>
    <property type="project" value="UniProtKB-KW"/>
</dbReference>
<dbReference type="GO" id="GO:0016979">
    <property type="term" value="F:lipoate-protein ligase activity"/>
    <property type="evidence" value="ECO:0007669"/>
    <property type="project" value="UniProtKB-EC"/>
</dbReference>
<dbReference type="GO" id="GO:0017118">
    <property type="term" value="F:lipoyltransferase activity"/>
    <property type="evidence" value="ECO:0007669"/>
    <property type="project" value="TreeGrafter"/>
</dbReference>
<dbReference type="GO" id="GO:0036211">
    <property type="term" value="P:protein modification process"/>
    <property type="evidence" value="ECO:0007669"/>
    <property type="project" value="InterPro"/>
</dbReference>
<dbReference type="CDD" id="cd16443">
    <property type="entry name" value="LplA"/>
    <property type="match status" value="1"/>
</dbReference>
<dbReference type="FunFam" id="3.30.930.10:FF:000107">
    <property type="entry name" value="Putative lipoate-protein ligase A"/>
    <property type="match status" value="1"/>
</dbReference>
<dbReference type="Gene3D" id="3.30.930.10">
    <property type="entry name" value="Bira Bifunctional Protein, Domain 2"/>
    <property type="match status" value="1"/>
</dbReference>
<dbReference type="InterPro" id="IPR045864">
    <property type="entry name" value="aa-tRNA-synth_II/BPL/LPL"/>
</dbReference>
<dbReference type="InterPro" id="IPR004143">
    <property type="entry name" value="BPL_LPL_catalytic"/>
</dbReference>
<dbReference type="InterPro" id="IPR004562">
    <property type="entry name" value="LipoylTrfase_LipoateP_Ligase"/>
</dbReference>
<dbReference type="NCBIfam" id="TIGR00545">
    <property type="entry name" value="lipoyltrans"/>
    <property type="match status" value="1"/>
</dbReference>
<dbReference type="PANTHER" id="PTHR12561">
    <property type="entry name" value="LIPOATE-PROTEIN LIGASE"/>
    <property type="match status" value="1"/>
</dbReference>
<dbReference type="PANTHER" id="PTHR12561:SF3">
    <property type="entry name" value="LIPOYLTRANSFERASE 1, MITOCHONDRIAL"/>
    <property type="match status" value="1"/>
</dbReference>
<dbReference type="Pfam" id="PF21948">
    <property type="entry name" value="LplA-B_cat"/>
    <property type="match status" value="1"/>
</dbReference>
<dbReference type="SUPFAM" id="SSF55681">
    <property type="entry name" value="Class II aaRS and biotin synthetases"/>
    <property type="match status" value="1"/>
</dbReference>
<dbReference type="PROSITE" id="PS51733">
    <property type="entry name" value="BPL_LPL_CATALYTIC"/>
    <property type="match status" value="1"/>
</dbReference>
<gene>
    <name type="primary">AIM22</name>
    <name type="ORF">AWRI1631_101610</name>
</gene>
<reference key="1">
    <citation type="journal article" date="2008" name="FEMS Yeast Res.">
        <title>Comparative genome analysis of a Saccharomyces cerevisiae wine strain.</title>
        <authorList>
            <person name="Borneman A.R."/>
            <person name="Forgan A.H."/>
            <person name="Pretorius I.S."/>
            <person name="Chambers P.J."/>
        </authorList>
    </citation>
    <scope>NUCLEOTIDE SEQUENCE [LARGE SCALE GENOMIC DNA]</scope>
    <source>
        <strain>AWRI1631</strain>
    </source>
</reference>
<comment type="function">
    <text evidence="1">Catalyzes both the ATP-dependent activation of exogenously supplied lipoate to lipoyl-AMP and the transfer of the activated lipoyl onto the lipoyl domains of lipoate-dependent enzymes.</text>
</comment>
<comment type="catalytic activity">
    <reaction>
        <text>L-lysyl-[lipoyl-carrier protein] + (R)-lipoate + ATP = N(6)-[(R)-lipoyl]-L-lysyl-[lipoyl-carrier protein] + AMP + diphosphate + H(+)</text>
        <dbReference type="Rhea" id="RHEA:49288"/>
        <dbReference type="Rhea" id="RHEA-COMP:10500"/>
        <dbReference type="Rhea" id="RHEA-COMP:10502"/>
        <dbReference type="ChEBI" id="CHEBI:15378"/>
        <dbReference type="ChEBI" id="CHEBI:29969"/>
        <dbReference type="ChEBI" id="CHEBI:30616"/>
        <dbReference type="ChEBI" id="CHEBI:33019"/>
        <dbReference type="ChEBI" id="CHEBI:83088"/>
        <dbReference type="ChEBI" id="CHEBI:83099"/>
        <dbReference type="ChEBI" id="CHEBI:456215"/>
        <dbReference type="EC" id="6.3.1.20"/>
    </reaction>
</comment>
<comment type="pathway">
    <text>Protein modification; protein lipoylation via exogenous pathway; protein N(6)-(lipoyl)lysine from lipoate: step 1/2.</text>
</comment>
<comment type="pathway">
    <text>Protein modification; protein lipoylation via exogenous pathway; protein N(6)-(lipoyl)lysine from lipoate: step 2/2.</text>
</comment>
<comment type="subunit">
    <text evidence="1">Monomer.</text>
</comment>
<comment type="miscellaneous">
    <text evidence="1">In the transfer reaction, the free carboxyl group of lipoic acid is attached via an amide linkage to the epsilon-amino group of a specific lysine residue of lipoyl domains of lipoate-dependent enzymes.</text>
</comment>
<comment type="similarity">
    <text evidence="3">Belongs to the LplA family.</text>
</comment>
<comment type="sequence caution" evidence="3">
    <conflict type="erroneous initiation">
        <sequence resource="EMBL-CDS" id="EDZ71262"/>
    </conflict>
</comment>